<proteinExistence type="inferred from homology"/>
<feature type="chain" id="PRO_1000144107" description="Large ribosomal subunit protein uL13">
    <location>
        <begin position="1"/>
        <end position="150"/>
    </location>
</feature>
<name>RL13_CHLTB</name>
<accession>B0BBB2</accession>
<gene>
    <name evidence="1" type="primary">rplM</name>
    <name type="ordered locus">CTLon_0376</name>
</gene>
<reference key="1">
    <citation type="journal article" date="2008" name="Genome Res.">
        <title>Chlamydia trachomatis: genome sequence analysis of lymphogranuloma venereum isolates.</title>
        <authorList>
            <person name="Thomson N.R."/>
            <person name="Holden M.T.G."/>
            <person name="Carder C."/>
            <person name="Lennard N."/>
            <person name="Lockey S.J."/>
            <person name="Marsh P."/>
            <person name="Skipp P."/>
            <person name="O'Connor C.D."/>
            <person name="Goodhead I."/>
            <person name="Norbertzcak H."/>
            <person name="Harris B."/>
            <person name="Ormond D."/>
            <person name="Rance R."/>
            <person name="Quail M.A."/>
            <person name="Parkhill J."/>
            <person name="Stephens R.S."/>
            <person name="Clarke I.N."/>
        </authorList>
    </citation>
    <scope>NUCLEOTIDE SEQUENCE [LARGE SCALE GENOMIC DNA]</scope>
    <source>
        <strain>UCH-1/proctitis</strain>
    </source>
</reference>
<sequence length="150" mass="16850">MEKRKDTKTTLAKASDDRNKAWYVVNAEGKTLGRLSSEVAKILRGKHKVTFTPHVAMGDGVIVINAEKVRLTGAKRAQKVYHYYTGFISGMREVPFENMIARKPAYVIEHAVKGMLPKTKLGRRQMKSLRVLKGSSYAQYEAIKPIVLDA</sequence>
<protein>
    <recommendedName>
        <fullName evidence="1">Large ribosomal subunit protein uL13</fullName>
    </recommendedName>
    <alternativeName>
        <fullName evidence="2">50S ribosomal protein L13</fullName>
    </alternativeName>
</protein>
<keyword id="KW-0687">Ribonucleoprotein</keyword>
<keyword id="KW-0689">Ribosomal protein</keyword>
<evidence type="ECO:0000255" key="1">
    <source>
        <dbReference type="HAMAP-Rule" id="MF_01366"/>
    </source>
</evidence>
<evidence type="ECO:0000305" key="2"/>
<comment type="function">
    <text evidence="1">This protein is one of the early assembly proteins of the 50S ribosomal subunit, although it is not seen to bind rRNA by itself. It is important during the early stages of 50S assembly.</text>
</comment>
<comment type="subunit">
    <text evidence="1">Part of the 50S ribosomal subunit.</text>
</comment>
<comment type="similarity">
    <text evidence="1">Belongs to the universal ribosomal protein uL13 family.</text>
</comment>
<organism>
    <name type="scientific">Chlamydia trachomatis serovar L2b (strain UCH-1/proctitis)</name>
    <dbReference type="NCBI Taxonomy" id="471473"/>
    <lineage>
        <taxon>Bacteria</taxon>
        <taxon>Pseudomonadati</taxon>
        <taxon>Chlamydiota</taxon>
        <taxon>Chlamydiia</taxon>
        <taxon>Chlamydiales</taxon>
        <taxon>Chlamydiaceae</taxon>
        <taxon>Chlamydia/Chlamydophila group</taxon>
        <taxon>Chlamydia</taxon>
    </lineage>
</organism>
<dbReference type="EMBL" id="AM884177">
    <property type="protein sequence ID" value="CAP06774.1"/>
    <property type="molecule type" value="Genomic_DNA"/>
</dbReference>
<dbReference type="RefSeq" id="WP_009871472.1">
    <property type="nucleotide sequence ID" value="NC_010280.2"/>
</dbReference>
<dbReference type="SMR" id="B0BBB2"/>
<dbReference type="KEGG" id="ctl:CTLon_0376"/>
<dbReference type="HOGENOM" id="CLU_082184_2_2_0"/>
<dbReference type="Proteomes" id="UP001154401">
    <property type="component" value="Chromosome"/>
</dbReference>
<dbReference type="GO" id="GO:0022625">
    <property type="term" value="C:cytosolic large ribosomal subunit"/>
    <property type="evidence" value="ECO:0007669"/>
    <property type="project" value="TreeGrafter"/>
</dbReference>
<dbReference type="GO" id="GO:0003729">
    <property type="term" value="F:mRNA binding"/>
    <property type="evidence" value="ECO:0007669"/>
    <property type="project" value="TreeGrafter"/>
</dbReference>
<dbReference type="GO" id="GO:0003735">
    <property type="term" value="F:structural constituent of ribosome"/>
    <property type="evidence" value="ECO:0007669"/>
    <property type="project" value="InterPro"/>
</dbReference>
<dbReference type="GO" id="GO:0017148">
    <property type="term" value="P:negative regulation of translation"/>
    <property type="evidence" value="ECO:0007669"/>
    <property type="project" value="TreeGrafter"/>
</dbReference>
<dbReference type="GO" id="GO:0006412">
    <property type="term" value="P:translation"/>
    <property type="evidence" value="ECO:0007669"/>
    <property type="project" value="UniProtKB-UniRule"/>
</dbReference>
<dbReference type="CDD" id="cd00392">
    <property type="entry name" value="Ribosomal_L13"/>
    <property type="match status" value="1"/>
</dbReference>
<dbReference type="FunFam" id="3.90.1180.10:FF:000016">
    <property type="entry name" value="50S ribosomal protein L13"/>
    <property type="match status" value="1"/>
</dbReference>
<dbReference type="Gene3D" id="3.90.1180.10">
    <property type="entry name" value="Ribosomal protein L13"/>
    <property type="match status" value="1"/>
</dbReference>
<dbReference type="HAMAP" id="MF_01366">
    <property type="entry name" value="Ribosomal_uL13"/>
    <property type="match status" value="1"/>
</dbReference>
<dbReference type="InterPro" id="IPR005822">
    <property type="entry name" value="Ribosomal_uL13"/>
</dbReference>
<dbReference type="InterPro" id="IPR005823">
    <property type="entry name" value="Ribosomal_uL13_bac-type"/>
</dbReference>
<dbReference type="InterPro" id="IPR023563">
    <property type="entry name" value="Ribosomal_uL13_CS"/>
</dbReference>
<dbReference type="InterPro" id="IPR036899">
    <property type="entry name" value="Ribosomal_uL13_sf"/>
</dbReference>
<dbReference type="NCBIfam" id="TIGR01066">
    <property type="entry name" value="rplM_bact"/>
    <property type="match status" value="1"/>
</dbReference>
<dbReference type="PANTHER" id="PTHR11545:SF2">
    <property type="entry name" value="LARGE RIBOSOMAL SUBUNIT PROTEIN UL13M"/>
    <property type="match status" value="1"/>
</dbReference>
<dbReference type="PANTHER" id="PTHR11545">
    <property type="entry name" value="RIBOSOMAL PROTEIN L13"/>
    <property type="match status" value="1"/>
</dbReference>
<dbReference type="Pfam" id="PF00572">
    <property type="entry name" value="Ribosomal_L13"/>
    <property type="match status" value="1"/>
</dbReference>
<dbReference type="PIRSF" id="PIRSF002181">
    <property type="entry name" value="Ribosomal_L13"/>
    <property type="match status" value="1"/>
</dbReference>
<dbReference type="SUPFAM" id="SSF52161">
    <property type="entry name" value="Ribosomal protein L13"/>
    <property type="match status" value="1"/>
</dbReference>
<dbReference type="PROSITE" id="PS00783">
    <property type="entry name" value="RIBOSOMAL_L13"/>
    <property type="match status" value="1"/>
</dbReference>